<organism>
    <name type="scientific">Delftia acidovorans (strain DSM 14801 / SPH-1)</name>
    <dbReference type="NCBI Taxonomy" id="398578"/>
    <lineage>
        <taxon>Bacteria</taxon>
        <taxon>Pseudomonadati</taxon>
        <taxon>Pseudomonadota</taxon>
        <taxon>Betaproteobacteria</taxon>
        <taxon>Burkholderiales</taxon>
        <taxon>Comamonadaceae</taxon>
        <taxon>Delftia</taxon>
    </lineage>
</organism>
<gene>
    <name evidence="1" type="primary">hemL</name>
    <name type="ordered locus">Daci_1569</name>
</gene>
<keyword id="KW-0963">Cytoplasm</keyword>
<keyword id="KW-0413">Isomerase</keyword>
<keyword id="KW-0627">Porphyrin biosynthesis</keyword>
<keyword id="KW-0663">Pyridoxal phosphate</keyword>
<keyword id="KW-1185">Reference proteome</keyword>
<comment type="catalytic activity">
    <reaction evidence="1">
        <text>(S)-4-amino-5-oxopentanoate = 5-aminolevulinate</text>
        <dbReference type="Rhea" id="RHEA:14265"/>
        <dbReference type="ChEBI" id="CHEBI:57501"/>
        <dbReference type="ChEBI" id="CHEBI:356416"/>
        <dbReference type="EC" id="5.4.3.8"/>
    </reaction>
</comment>
<comment type="cofactor">
    <cofactor evidence="1">
        <name>pyridoxal 5'-phosphate</name>
        <dbReference type="ChEBI" id="CHEBI:597326"/>
    </cofactor>
</comment>
<comment type="pathway">
    <text evidence="1">Porphyrin-containing compound metabolism; protoporphyrin-IX biosynthesis; 5-aminolevulinate from L-glutamyl-tRNA(Glu): step 2/2.</text>
</comment>
<comment type="subunit">
    <text evidence="1">Homodimer.</text>
</comment>
<comment type="subcellular location">
    <subcellularLocation>
        <location evidence="1">Cytoplasm</location>
    </subcellularLocation>
</comment>
<comment type="similarity">
    <text evidence="1">Belongs to the class-III pyridoxal-phosphate-dependent aminotransferase family. HemL subfamily.</text>
</comment>
<protein>
    <recommendedName>
        <fullName evidence="1">Glutamate-1-semialdehyde 2,1-aminomutase</fullName>
        <shortName evidence="1">GSA</shortName>
        <ecNumber evidence="1">5.4.3.8</ecNumber>
    </recommendedName>
    <alternativeName>
        <fullName evidence="1">Glutamate-1-semialdehyde aminotransferase</fullName>
        <shortName evidence="1">GSA-AT</shortName>
    </alternativeName>
</protein>
<proteinExistence type="inferred from homology"/>
<dbReference type="EC" id="5.4.3.8" evidence="1"/>
<dbReference type="EMBL" id="CP000884">
    <property type="protein sequence ID" value="ABX34213.1"/>
    <property type="molecule type" value="Genomic_DNA"/>
</dbReference>
<dbReference type="SMR" id="A9BY74"/>
<dbReference type="STRING" id="398578.Daci_1569"/>
<dbReference type="KEGG" id="dac:Daci_1569"/>
<dbReference type="eggNOG" id="COG0001">
    <property type="taxonomic scope" value="Bacteria"/>
</dbReference>
<dbReference type="HOGENOM" id="CLU_016922_1_5_4"/>
<dbReference type="UniPathway" id="UPA00251">
    <property type="reaction ID" value="UER00317"/>
</dbReference>
<dbReference type="Proteomes" id="UP000000784">
    <property type="component" value="Chromosome"/>
</dbReference>
<dbReference type="GO" id="GO:0005737">
    <property type="term" value="C:cytoplasm"/>
    <property type="evidence" value="ECO:0007669"/>
    <property type="project" value="UniProtKB-SubCell"/>
</dbReference>
<dbReference type="GO" id="GO:0042286">
    <property type="term" value="F:glutamate-1-semialdehyde 2,1-aminomutase activity"/>
    <property type="evidence" value="ECO:0007669"/>
    <property type="project" value="UniProtKB-UniRule"/>
</dbReference>
<dbReference type="GO" id="GO:0030170">
    <property type="term" value="F:pyridoxal phosphate binding"/>
    <property type="evidence" value="ECO:0007669"/>
    <property type="project" value="InterPro"/>
</dbReference>
<dbReference type="GO" id="GO:0008483">
    <property type="term" value="F:transaminase activity"/>
    <property type="evidence" value="ECO:0007669"/>
    <property type="project" value="InterPro"/>
</dbReference>
<dbReference type="GO" id="GO:0006782">
    <property type="term" value="P:protoporphyrinogen IX biosynthetic process"/>
    <property type="evidence" value="ECO:0007669"/>
    <property type="project" value="UniProtKB-UniRule"/>
</dbReference>
<dbReference type="CDD" id="cd00610">
    <property type="entry name" value="OAT_like"/>
    <property type="match status" value="1"/>
</dbReference>
<dbReference type="FunFam" id="3.40.640.10:FF:000021">
    <property type="entry name" value="Glutamate-1-semialdehyde 2,1-aminomutase"/>
    <property type="match status" value="1"/>
</dbReference>
<dbReference type="Gene3D" id="3.90.1150.10">
    <property type="entry name" value="Aspartate Aminotransferase, domain 1"/>
    <property type="match status" value="1"/>
</dbReference>
<dbReference type="Gene3D" id="3.40.640.10">
    <property type="entry name" value="Type I PLP-dependent aspartate aminotransferase-like (Major domain)"/>
    <property type="match status" value="1"/>
</dbReference>
<dbReference type="HAMAP" id="MF_00375">
    <property type="entry name" value="HemL_aminotrans_3"/>
    <property type="match status" value="1"/>
</dbReference>
<dbReference type="InterPro" id="IPR004639">
    <property type="entry name" value="4pyrrol_synth_GluAld_NH2Trfase"/>
</dbReference>
<dbReference type="InterPro" id="IPR005814">
    <property type="entry name" value="Aminotrans_3"/>
</dbReference>
<dbReference type="InterPro" id="IPR015424">
    <property type="entry name" value="PyrdxlP-dep_Trfase"/>
</dbReference>
<dbReference type="InterPro" id="IPR015421">
    <property type="entry name" value="PyrdxlP-dep_Trfase_major"/>
</dbReference>
<dbReference type="InterPro" id="IPR015422">
    <property type="entry name" value="PyrdxlP-dep_Trfase_small"/>
</dbReference>
<dbReference type="NCBIfam" id="TIGR00713">
    <property type="entry name" value="hemL"/>
    <property type="match status" value="1"/>
</dbReference>
<dbReference type="NCBIfam" id="NF000818">
    <property type="entry name" value="PRK00062.1"/>
    <property type="match status" value="1"/>
</dbReference>
<dbReference type="PANTHER" id="PTHR43713">
    <property type="entry name" value="GLUTAMATE-1-SEMIALDEHYDE 2,1-AMINOMUTASE"/>
    <property type="match status" value="1"/>
</dbReference>
<dbReference type="PANTHER" id="PTHR43713:SF3">
    <property type="entry name" value="GLUTAMATE-1-SEMIALDEHYDE 2,1-AMINOMUTASE 1, CHLOROPLASTIC-RELATED"/>
    <property type="match status" value="1"/>
</dbReference>
<dbReference type="Pfam" id="PF00202">
    <property type="entry name" value="Aminotran_3"/>
    <property type="match status" value="1"/>
</dbReference>
<dbReference type="SUPFAM" id="SSF53383">
    <property type="entry name" value="PLP-dependent transferases"/>
    <property type="match status" value="1"/>
</dbReference>
<reference key="1">
    <citation type="submission" date="2007-11" db="EMBL/GenBank/DDBJ databases">
        <title>Complete sequence of Delftia acidovorans DSM 14801 / SPH-1.</title>
        <authorList>
            <person name="Copeland A."/>
            <person name="Lucas S."/>
            <person name="Lapidus A."/>
            <person name="Barry K."/>
            <person name="Glavina del Rio T."/>
            <person name="Dalin E."/>
            <person name="Tice H."/>
            <person name="Pitluck S."/>
            <person name="Lowry S."/>
            <person name="Clum A."/>
            <person name="Schmutz J."/>
            <person name="Larimer F."/>
            <person name="Land M."/>
            <person name="Hauser L."/>
            <person name="Kyrpides N."/>
            <person name="Kim E."/>
            <person name="Schleheck D."/>
            <person name="Richardson P."/>
        </authorList>
    </citation>
    <scope>NUCLEOTIDE SEQUENCE [LARGE SCALE GENOMIC DNA]</scope>
    <source>
        <strain>DSM 14801 / SPH-1</strain>
    </source>
</reference>
<feature type="chain" id="PRO_0000382304" description="Glutamate-1-semialdehyde 2,1-aminomutase">
    <location>
        <begin position="1"/>
        <end position="438"/>
    </location>
</feature>
<feature type="modified residue" description="N6-(pyridoxal phosphate)lysine" evidence="1">
    <location>
        <position position="278"/>
    </location>
</feature>
<accession>A9BY74</accession>
<name>GSA_DELAS</name>
<evidence type="ECO:0000255" key="1">
    <source>
        <dbReference type="HAMAP-Rule" id="MF_00375"/>
    </source>
</evidence>
<sequence length="438" mass="46977">MADSCTMTTDLNIPLFERAKAVIPGGVNSPVRAFNAVGGTPRFVRRAQGAHFWDENAQQFTDYIGSWGPMILGHGHPEVMAAVQAAALEGFSFGAPTEREVVLAEKILSLMPSMDMVRMVSSGTEAGMSALRLARGFTGRNKIIKFNGCYHGHADALLVKAGSGLATFGASSSAGVPQDVVKDTVVLEYNDVGQLEEAFAQFGDQIACVIMEPIAGNMNFVRASVPFTRRIRELTREHGALMVYDEVMTGFRVALGSAQSLYAQHIEGFAPDITVLGKVIGGGMPMAAFGARREIMEKLSPLGPVYQAGTLSGNPIATACGLKTLELISEPGFHDALHAKTGRLMAGFKAEADAAGVPFSVDHQGGLFGFYLLPELPSTWTEVMKTDGARFNRFFHGMLERGHYFAPALYEAGFVSAAHTDADIDKTIEAAREVFKTL</sequence>